<reference key="1">
    <citation type="online journal article" date="2000" name="Plant Gene Register">
        <title>AtJ20, a plastid-localized type III J-domain protein from Arabidopsis thaliana.</title>
        <authorList>
            <person name="Miernyk J.A."/>
            <person name="Coop N.E."/>
        </authorList>
        <locator>PGR00-027</locator>
    </citation>
    <scope>NUCLEOTIDE SEQUENCE [MRNA]</scope>
    <scope>TISSUE SPECIFICITY</scope>
    <source>
        <strain>cv. Columbia</strain>
    </source>
</reference>
<reference key="2">
    <citation type="journal article" date="1999" name="Nature">
        <title>Sequence and analysis of chromosome 4 of the plant Arabidopsis thaliana.</title>
        <authorList>
            <person name="Mayer K.F.X."/>
            <person name="Schueller C."/>
            <person name="Wambutt R."/>
            <person name="Murphy G."/>
            <person name="Volckaert G."/>
            <person name="Pohl T."/>
            <person name="Duesterhoeft A."/>
            <person name="Stiekema W."/>
            <person name="Entian K.-D."/>
            <person name="Terryn N."/>
            <person name="Harris B."/>
            <person name="Ansorge W."/>
            <person name="Brandt P."/>
            <person name="Grivell L.A."/>
            <person name="Rieger M."/>
            <person name="Weichselgartner M."/>
            <person name="de Simone V."/>
            <person name="Obermaier B."/>
            <person name="Mache R."/>
            <person name="Mueller M."/>
            <person name="Kreis M."/>
            <person name="Delseny M."/>
            <person name="Puigdomenech P."/>
            <person name="Watson M."/>
            <person name="Schmidtheini T."/>
            <person name="Reichert B."/>
            <person name="Portetelle D."/>
            <person name="Perez-Alonso M."/>
            <person name="Boutry M."/>
            <person name="Bancroft I."/>
            <person name="Vos P."/>
            <person name="Hoheisel J."/>
            <person name="Zimmermann W."/>
            <person name="Wedler H."/>
            <person name="Ridley P."/>
            <person name="Langham S.-A."/>
            <person name="McCullagh B."/>
            <person name="Bilham L."/>
            <person name="Robben J."/>
            <person name="van der Schueren J."/>
            <person name="Grymonprez B."/>
            <person name="Chuang Y.-J."/>
            <person name="Vandenbussche F."/>
            <person name="Braeken M."/>
            <person name="Weltjens I."/>
            <person name="Voet M."/>
            <person name="Bastiaens I."/>
            <person name="Aert R."/>
            <person name="Defoor E."/>
            <person name="Weitzenegger T."/>
            <person name="Bothe G."/>
            <person name="Ramsperger U."/>
            <person name="Hilbert H."/>
            <person name="Braun M."/>
            <person name="Holzer E."/>
            <person name="Brandt A."/>
            <person name="Peters S."/>
            <person name="van Staveren M."/>
            <person name="Dirkse W."/>
            <person name="Mooijman P."/>
            <person name="Klein Lankhorst R."/>
            <person name="Rose M."/>
            <person name="Hauf J."/>
            <person name="Koetter P."/>
            <person name="Berneiser S."/>
            <person name="Hempel S."/>
            <person name="Feldpausch M."/>
            <person name="Lamberth S."/>
            <person name="Van den Daele H."/>
            <person name="De Keyser A."/>
            <person name="Buysshaert C."/>
            <person name="Gielen J."/>
            <person name="Villarroel R."/>
            <person name="De Clercq R."/>
            <person name="van Montagu M."/>
            <person name="Rogers J."/>
            <person name="Cronin A."/>
            <person name="Quail M.A."/>
            <person name="Bray-Allen S."/>
            <person name="Clark L."/>
            <person name="Doggett J."/>
            <person name="Hall S."/>
            <person name="Kay M."/>
            <person name="Lennard N."/>
            <person name="McLay K."/>
            <person name="Mayes R."/>
            <person name="Pettett A."/>
            <person name="Rajandream M.A."/>
            <person name="Lyne M."/>
            <person name="Benes V."/>
            <person name="Rechmann S."/>
            <person name="Borkova D."/>
            <person name="Bloecker H."/>
            <person name="Scharfe M."/>
            <person name="Grimm M."/>
            <person name="Loehnert T.-H."/>
            <person name="Dose S."/>
            <person name="de Haan M."/>
            <person name="Maarse A.C."/>
            <person name="Schaefer M."/>
            <person name="Mueller-Auer S."/>
            <person name="Gabel C."/>
            <person name="Fuchs M."/>
            <person name="Fartmann B."/>
            <person name="Granderath K."/>
            <person name="Dauner D."/>
            <person name="Herzl A."/>
            <person name="Neumann S."/>
            <person name="Argiriou A."/>
            <person name="Vitale D."/>
            <person name="Liguori R."/>
            <person name="Piravandi E."/>
            <person name="Massenet O."/>
            <person name="Quigley F."/>
            <person name="Clabauld G."/>
            <person name="Muendlein A."/>
            <person name="Felber R."/>
            <person name="Schnabl S."/>
            <person name="Hiller R."/>
            <person name="Schmidt W."/>
            <person name="Lecharny A."/>
            <person name="Aubourg S."/>
            <person name="Chefdor F."/>
            <person name="Cooke R."/>
            <person name="Berger C."/>
            <person name="Monfort A."/>
            <person name="Casacuberta E."/>
            <person name="Gibbons T."/>
            <person name="Weber N."/>
            <person name="Vandenbol M."/>
            <person name="Bargues M."/>
            <person name="Terol J."/>
            <person name="Torres A."/>
            <person name="Perez-Perez A."/>
            <person name="Purnelle B."/>
            <person name="Bent E."/>
            <person name="Johnson S."/>
            <person name="Tacon D."/>
            <person name="Jesse T."/>
            <person name="Heijnen L."/>
            <person name="Schwarz S."/>
            <person name="Scholler P."/>
            <person name="Heber S."/>
            <person name="Francs P."/>
            <person name="Bielke C."/>
            <person name="Frishman D."/>
            <person name="Haase D."/>
            <person name="Lemcke K."/>
            <person name="Mewes H.-W."/>
            <person name="Stocker S."/>
            <person name="Zaccaria P."/>
            <person name="Bevan M."/>
            <person name="Wilson R.K."/>
            <person name="de la Bastide M."/>
            <person name="Habermann K."/>
            <person name="Parnell L."/>
            <person name="Dedhia N."/>
            <person name="Gnoj L."/>
            <person name="Schutz K."/>
            <person name="Huang E."/>
            <person name="Spiegel L."/>
            <person name="Sekhon M."/>
            <person name="Murray J."/>
            <person name="Sheet P."/>
            <person name="Cordes M."/>
            <person name="Abu-Threideh J."/>
            <person name="Stoneking T."/>
            <person name="Kalicki J."/>
            <person name="Graves T."/>
            <person name="Harmon G."/>
            <person name="Edwards J."/>
            <person name="Latreille P."/>
            <person name="Courtney L."/>
            <person name="Cloud J."/>
            <person name="Abbott A."/>
            <person name="Scott K."/>
            <person name="Johnson D."/>
            <person name="Minx P."/>
            <person name="Bentley D."/>
            <person name="Fulton B."/>
            <person name="Miller N."/>
            <person name="Greco T."/>
            <person name="Kemp K."/>
            <person name="Kramer J."/>
            <person name="Fulton L."/>
            <person name="Mardis E."/>
            <person name="Dante M."/>
            <person name="Pepin K."/>
            <person name="Hillier L.W."/>
            <person name="Nelson J."/>
            <person name="Spieth J."/>
            <person name="Ryan E."/>
            <person name="Andrews S."/>
            <person name="Geisel C."/>
            <person name="Layman D."/>
            <person name="Du H."/>
            <person name="Ali J."/>
            <person name="Berghoff A."/>
            <person name="Jones K."/>
            <person name="Drone K."/>
            <person name="Cotton M."/>
            <person name="Joshu C."/>
            <person name="Antonoiu B."/>
            <person name="Zidanic M."/>
            <person name="Strong C."/>
            <person name="Sun H."/>
            <person name="Lamar B."/>
            <person name="Yordan C."/>
            <person name="Ma P."/>
            <person name="Zhong J."/>
            <person name="Preston R."/>
            <person name="Vil D."/>
            <person name="Shekher M."/>
            <person name="Matero A."/>
            <person name="Shah R."/>
            <person name="Swaby I.K."/>
            <person name="O'Shaughnessy A."/>
            <person name="Rodriguez M."/>
            <person name="Hoffman J."/>
            <person name="Till S."/>
            <person name="Granat S."/>
            <person name="Shohdy N."/>
            <person name="Hasegawa A."/>
            <person name="Hameed A."/>
            <person name="Lodhi M."/>
            <person name="Johnson A."/>
            <person name="Chen E."/>
            <person name="Marra M.A."/>
            <person name="Martienssen R."/>
            <person name="McCombie W.R."/>
        </authorList>
    </citation>
    <scope>NUCLEOTIDE SEQUENCE [LARGE SCALE GENOMIC DNA]</scope>
    <source>
        <strain>cv. Columbia</strain>
    </source>
</reference>
<reference key="3">
    <citation type="journal article" date="2017" name="Plant J.">
        <title>Araport11: a complete reannotation of the Arabidopsis thaliana reference genome.</title>
        <authorList>
            <person name="Cheng C.Y."/>
            <person name="Krishnakumar V."/>
            <person name="Chan A.P."/>
            <person name="Thibaud-Nissen F."/>
            <person name="Schobel S."/>
            <person name="Town C.D."/>
        </authorList>
    </citation>
    <scope>GENOME REANNOTATION</scope>
    <source>
        <strain>cv. Columbia</strain>
    </source>
</reference>
<reference key="4">
    <citation type="journal article" date="2003" name="Science">
        <title>Empirical analysis of transcriptional activity in the Arabidopsis genome.</title>
        <authorList>
            <person name="Yamada K."/>
            <person name="Lim J."/>
            <person name="Dale J.M."/>
            <person name="Chen H."/>
            <person name="Shinn P."/>
            <person name="Palm C.J."/>
            <person name="Southwick A.M."/>
            <person name="Wu H.C."/>
            <person name="Kim C.J."/>
            <person name="Nguyen M."/>
            <person name="Pham P.K."/>
            <person name="Cheuk R.F."/>
            <person name="Karlin-Newmann G."/>
            <person name="Liu S.X."/>
            <person name="Lam B."/>
            <person name="Sakano H."/>
            <person name="Wu T."/>
            <person name="Yu G."/>
            <person name="Miranda M."/>
            <person name="Quach H.L."/>
            <person name="Tripp M."/>
            <person name="Chang C.H."/>
            <person name="Lee J.M."/>
            <person name="Toriumi M.J."/>
            <person name="Chan M.M."/>
            <person name="Tang C.C."/>
            <person name="Onodera C.S."/>
            <person name="Deng J.M."/>
            <person name="Akiyama K."/>
            <person name="Ansari Y."/>
            <person name="Arakawa T."/>
            <person name="Banh J."/>
            <person name="Banno F."/>
            <person name="Bowser L."/>
            <person name="Brooks S.Y."/>
            <person name="Carninci P."/>
            <person name="Chao Q."/>
            <person name="Choy N."/>
            <person name="Enju A."/>
            <person name="Goldsmith A.D."/>
            <person name="Gurjal M."/>
            <person name="Hansen N.F."/>
            <person name="Hayashizaki Y."/>
            <person name="Johnson-Hopson C."/>
            <person name="Hsuan V.W."/>
            <person name="Iida K."/>
            <person name="Karnes M."/>
            <person name="Khan S."/>
            <person name="Koesema E."/>
            <person name="Ishida J."/>
            <person name="Jiang P.X."/>
            <person name="Jones T."/>
            <person name="Kawai J."/>
            <person name="Kamiya A."/>
            <person name="Meyers C."/>
            <person name="Nakajima M."/>
            <person name="Narusaka M."/>
            <person name="Seki M."/>
            <person name="Sakurai T."/>
            <person name="Satou M."/>
            <person name="Tamse R."/>
            <person name="Vaysberg M."/>
            <person name="Wallender E.K."/>
            <person name="Wong C."/>
            <person name="Yamamura Y."/>
            <person name="Yuan S."/>
            <person name="Shinozaki K."/>
            <person name="Davis R.W."/>
            <person name="Theologis A."/>
            <person name="Ecker J.R."/>
        </authorList>
    </citation>
    <scope>NUCLEOTIDE SEQUENCE [LARGE SCALE MRNA]</scope>
    <source>
        <strain>cv. Columbia</strain>
    </source>
</reference>
<reference key="5">
    <citation type="journal article" date="2001" name="Cell Stress Chaperones">
        <title>The J-domain proteins of Arabidopsis thaliana: an unexpectedly large and diverse family of chaperones.</title>
        <authorList>
            <person name="Miernyk J.A."/>
        </authorList>
    </citation>
    <scope>GENE FAMILY</scope>
    <scope>NOMENCLATURE</scope>
</reference>
<reference key="6">
    <citation type="journal article" date="2004" name="Plant Physiol.">
        <title>The fast and transient transcriptional network of gravity and mechanical stimulation in the Arabidopsis root apex.</title>
        <authorList>
            <person name="Kimbrough J.M."/>
            <person name="Salinas-Mondragon R."/>
            <person name="Boss W.F."/>
            <person name="Brown C.S."/>
            <person name="Sederoff H.W."/>
        </authorList>
    </citation>
    <scope>INDUCTION</scope>
</reference>
<comment type="function">
    <text evidence="1">Plays a continuous role in plant development probably in the structural organization of compartments.</text>
</comment>
<comment type="interaction">
    <interactant intactId="EBI-6897500">
        <id>Q9SDN0</id>
    </interactant>
    <interactant intactId="EBI-4476357">
        <id>Q38854</id>
        <label>DXS</label>
    </interactant>
    <organismsDiffer>false</organismsDiffer>
    <experiments>4</experiments>
</comment>
<comment type="subcellular location">
    <subcellularLocation>
        <location evidence="7">Plastid</location>
        <location evidence="7">Chloroplast</location>
    </subcellularLocation>
</comment>
<comment type="alternative products">
    <event type="alternative splicing"/>
    <isoform>
        <id>Q9SDN0-1</id>
        <name>1</name>
        <sequence type="displayed"/>
    </isoform>
    <text>A number of isoforms are produced. According to EST sequences.</text>
</comment>
<comment type="tissue specificity">
    <text evidence="6">Light-grown seedlings.</text>
</comment>
<comment type="induction">
    <text evidence="5">Down-regulated by mechanical and gravity stimulations.</text>
</comment>
<comment type="similarity">
    <text evidence="7">Belongs to the DnaJ family. C/III subfamily.</text>
</comment>
<keyword id="KW-0025">Alternative splicing</keyword>
<keyword id="KW-0143">Chaperone</keyword>
<keyword id="KW-0150">Chloroplast</keyword>
<keyword id="KW-0934">Plastid</keyword>
<keyword id="KW-1185">Reference proteome</keyword>
<keyword id="KW-0809">Transit peptide</keyword>
<sequence length="197" mass="23361">MKCYKSSSILSTNHHPFFYKQQPISSLQPTSIPTTISYPTRTRFSSTRIQSRLTHDDPVKQSEDLSFYDLLGVTESVTLPEIKQAYKQLARKYHPDVSPPDRVEEYTDRFIRVQEAYETLSDPRRRVLYDRDLSMGFSFSFSGRRQNRYDQEVVEEKSEWKAKWQTQLSGLRRRSNQKDNNTMSWAARMRRQQQESS</sequence>
<dbReference type="EMBL" id="AF214107">
    <property type="protein sequence ID" value="AAF24498.1"/>
    <property type="molecule type" value="mRNA"/>
</dbReference>
<dbReference type="EMBL" id="AL035528">
    <property type="protein sequence ID" value="CAB36847.1"/>
    <property type="molecule type" value="Genomic_DNA"/>
</dbReference>
<dbReference type="EMBL" id="AL161537">
    <property type="protein sequence ID" value="CAB78425.1"/>
    <property type="molecule type" value="Genomic_DNA"/>
</dbReference>
<dbReference type="EMBL" id="CP002687">
    <property type="protein sequence ID" value="AEE83331.1"/>
    <property type="molecule type" value="Genomic_DNA"/>
</dbReference>
<dbReference type="EMBL" id="AF370236">
    <property type="protein sequence ID" value="AAK44051.1"/>
    <property type="molecule type" value="mRNA"/>
</dbReference>
<dbReference type="EMBL" id="AY113929">
    <property type="protein sequence ID" value="AAM44977.1"/>
    <property type="molecule type" value="mRNA"/>
</dbReference>
<dbReference type="PIR" id="T05252">
    <property type="entry name" value="T05252"/>
</dbReference>
<dbReference type="RefSeq" id="NP_193119.1">
    <molecule id="Q9SDN0-1"/>
    <property type="nucleotide sequence ID" value="NM_117457.5"/>
</dbReference>
<dbReference type="SMR" id="Q9SDN0"/>
<dbReference type="BioGRID" id="12314">
    <property type="interactions" value="1"/>
</dbReference>
<dbReference type="FunCoup" id="Q9SDN0">
    <property type="interactions" value="36"/>
</dbReference>
<dbReference type="IntAct" id="Q9SDN0">
    <property type="interactions" value="1"/>
</dbReference>
<dbReference type="STRING" id="3702.Q9SDN0"/>
<dbReference type="PaxDb" id="3702-AT4G13830.2"/>
<dbReference type="ProteomicsDB" id="222083">
    <molecule id="Q9SDN0-1"/>
</dbReference>
<dbReference type="EnsemblPlants" id="AT4G13830.2">
    <molecule id="Q9SDN0-1"/>
    <property type="protein sequence ID" value="AT4G13830.2"/>
    <property type="gene ID" value="AT4G13830"/>
</dbReference>
<dbReference type="GeneID" id="827017"/>
<dbReference type="Gramene" id="AT4G13830.2">
    <molecule id="Q9SDN0-1"/>
    <property type="protein sequence ID" value="AT4G13830.2"/>
    <property type="gene ID" value="AT4G13830"/>
</dbReference>
<dbReference type="KEGG" id="ath:AT4G13830"/>
<dbReference type="Araport" id="AT4G13830"/>
<dbReference type="TAIR" id="AT4G13830">
    <property type="gene designation" value="J20"/>
</dbReference>
<dbReference type="eggNOG" id="KOG0712">
    <property type="taxonomic scope" value="Eukaryota"/>
</dbReference>
<dbReference type="HOGENOM" id="CLU_017633_9_0_1"/>
<dbReference type="InParanoid" id="Q9SDN0"/>
<dbReference type="OMA" id="QYDEGME"/>
<dbReference type="PhylomeDB" id="Q9SDN0"/>
<dbReference type="PRO" id="PR:Q9SDN0"/>
<dbReference type="Proteomes" id="UP000006548">
    <property type="component" value="Chromosome 4"/>
</dbReference>
<dbReference type="ExpressionAtlas" id="Q9SDN0">
    <property type="expression patterns" value="baseline and differential"/>
</dbReference>
<dbReference type="GO" id="GO:0009507">
    <property type="term" value="C:chloroplast"/>
    <property type="evidence" value="ECO:0000314"/>
    <property type="project" value="TAIR"/>
</dbReference>
<dbReference type="GO" id="GO:0005634">
    <property type="term" value="C:nucleus"/>
    <property type="evidence" value="ECO:0000314"/>
    <property type="project" value="TAIR"/>
</dbReference>
<dbReference type="GO" id="GO:0061077">
    <property type="term" value="P:chaperone-mediated protein folding"/>
    <property type="evidence" value="ECO:0000315"/>
    <property type="project" value="TAIR"/>
</dbReference>
<dbReference type="GO" id="GO:0010322">
    <property type="term" value="P:regulation of isopentenyl diphosphate biosynthetic process, methylerythritol 4-phosphate pathway"/>
    <property type="evidence" value="ECO:0000315"/>
    <property type="project" value="TAIR"/>
</dbReference>
<dbReference type="CDD" id="cd06257">
    <property type="entry name" value="DnaJ"/>
    <property type="match status" value="1"/>
</dbReference>
<dbReference type="FunFam" id="1.10.287.110:FF:000145">
    <property type="entry name" value="Chaperone protein dnaJ 20, chloroplastic"/>
    <property type="match status" value="1"/>
</dbReference>
<dbReference type="Gene3D" id="1.10.287.110">
    <property type="entry name" value="DnaJ domain"/>
    <property type="match status" value="1"/>
</dbReference>
<dbReference type="InterPro" id="IPR053232">
    <property type="entry name" value="DnaJ_C/III_chloroplastic"/>
</dbReference>
<dbReference type="InterPro" id="IPR001623">
    <property type="entry name" value="DnaJ_domain"/>
</dbReference>
<dbReference type="InterPro" id="IPR018253">
    <property type="entry name" value="DnaJ_domain_CS"/>
</dbReference>
<dbReference type="InterPro" id="IPR036869">
    <property type="entry name" value="J_dom_sf"/>
</dbReference>
<dbReference type="PANTHER" id="PTHR45090">
    <property type="entry name" value="CHAPERONE PROTEIN DNAJ 20 CHLOROPLASTIC"/>
    <property type="match status" value="1"/>
</dbReference>
<dbReference type="PANTHER" id="PTHR45090:SF4">
    <property type="entry name" value="J DOMAIN-CONTAINING PROTEIN"/>
    <property type="match status" value="1"/>
</dbReference>
<dbReference type="Pfam" id="PF00226">
    <property type="entry name" value="DnaJ"/>
    <property type="match status" value="1"/>
</dbReference>
<dbReference type="PRINTS" id="PR00625">
    <property type="entry name" value="JDOMAIN"/>
</dbReference>
<dbReference type="SMART" id="SM00271">
    <property type="entry name" value="DnaJ"/>
    <property type="match status" value="1"/>
</dbReference>
<dbReference type="SUPFAM" id="SSF46565">
    <property type="entry name" value="Chaperone J-domain"/>
    <property type="match status" value="1"/>
</dbReference>
<dbReference type="PROSITE" id="PS00636">
    <property type="entry name" value="DNAJ_1"/>
    <property type="match status" value="1"/>
</dbReference>
<dbReference type="PROSITE" id="PS50076">
    <property type="entry name" value="DNAJ_2"/>
    <property type="match status" value="1"/>
</dbReference>
<protein>
    <recommendedName>
        <fullName>Chaperone protein dnaJ 20, chloroplastic</fullName>
        <shortName>AtDjC20</shortName>
        <shortName>AtJ20</shortName>
    </recommendedName>
</protein>
<proteinExistence type="evidence at protein level"/>
<gene>
    <name type="primary">ATJ20</name>
    <name type="synonym">C20</name>
    <name type="synonym">J20</name>
    <name type="ordered locus">At4g13830</name>
    <name type="ORF">F18A5.220</name>
</gene>
<evidence type="ECO:0000250" key="1"/>
<evidence type="ECO:0000255" key="2"/>
<evidence type="ECO:0000255" key="3">
    <source>
        <dbReference type="PROSITE-ProRule" id="PRU00286"/>
    </source>
</evidence>
<evidence type="ECO:0000256" key="4">
    <source>
        <dbReference type="SAM" id="MobiDB-lite"/>
    </source>
</evidence>
<evidence type="ECO:0000269" key="5">
    <source>
    </source>
</evidence>
<evidence type="ECO:0000269" key="6">
    <source ref="1"/>
</evidence>
<evidence type="ECO:0000305" key="7"/>
<feature type="transit peptide" description="Chloroplast" evidence="2">
    <location>
        <begin position="1"/>
        <end position="60"/>
    </location>
</feature>
<feature type="chain" id="PRO_0000007267" description="Chaperone protein dnaJ 20, chloroplastic">
    <location>
        <begin position="61"/>
        <end position="197"/>
    </location>
</feature>
<feature type="domain" description="J" evidence="3">
    <location>
        <begin position="66"/>
        <end position="133"/>
    </location>
</feature>
<feature type="region of interest" description="Disordered" evidence="4">
    <location>
        <begin position="169"/>
        <end position="197"/>
    </location>
</feature>
<feature type="sequence conflict" description="In Ref. 1; AAF24498." evidence="7" ref="1">
    <original>Q</original>
    <variation>R</variation>
    <location>
        <position position="146"/>
    </location>
</feature>
<organism>
    <name type="scientific">Arabidopsis thaliana</name>
    <name type="common">Mouse-ear cress</name>
    <dbReference type="NCBI Taxonomy" id="3702"/>
    <lineage>
        <taxon>Eukaryota</taxon>
        <taxon>Viridiplantae</taxon>
        <taxon>Streptophyta</taxon>
        <taxon>Embryophyta</taxon>
        <taxon>Tracheophyta</taxon>
        <taxon>Spermatophyta</taxon>
        <taxon>Magnoliopsida</taxon>
        <taxon>eudicotyledons</taxon>
        <taxon>Gunneridae</taxon>
        <taxon>Pentapetalae</taxon>
        <taxon>rosids</taxon>
        <taxon>malvids</taxon>
        <taxon>Brassicales</taxon>
        <taxon>Brassicaceae</taxon>
        <taxon>Camelineae</taxon>
        <taxon>Arabidopsis</taxon>
    </lineage>
</organism>
<accession>Q9SDN0</accession>
<accession>Q9SVN0</accession>
<name>DNJ20_ARATH</name>